<comment type="function">
    <text evidence="1">The RecF protein is involved in DNA metabolism; it is required for DNA replication and normal SOS inducibility. RecF binds preferentially to single-stranded, linear DNA. It also seems to bind ATP (By similarity).</text>
</comment>
<comment type="subcellular location">
    <subcellularLocation>
        <location evidence="1">Cytoplasm</location>
    </subcellularLocation>
</comment>
<comment type="similarity">
    <text evidence="3">Belongs to the RecF family.</text>
</comment>
<keyword id="KW-0067">ATP-binding</keyword>
<keyword id="KW-0963">Cytoplasm</keyword>
<keyword id="KW-0227">DNA damage</keyword>
<keyword id="KW-0234">DNA repair</keyword>
<keyword id="KW-0235">DNA replication</keyword>
<keyword id="KW-0238">DNA-binding</keyword>
<keyword id="KW-0547">Nucleotide-binding</keyword>
<keyword id="KW-1185">Reference proteome</keyword>
<keyword id="KW-0742">SOS response</keyword>
<evidence type="ECO:0000250" key="1"/>
<evidence type="ECO:0000255" key="2"/>
<evidence type="ECO:0000305" key="3"/>
<reference key="1">
    <citation type="journal article" date="2000" name="Nature">
        <title>Complete genome sequence of Pseudomonas aeruginosa PAO1, an opportunistic pathogen.</title>
        <authorList>
            <person name="Stover C.K."/>
            <person name="Pham X.-Q.T."/>
            <person name="Erwin A.L."/>
            <person name="Mizoguchi S.D."/>
            <person name="Warrener P."/>
            <person name="Hickey M.J."/>
            <person name="Brinkman F.S.L."/>
            <person name="Hufnagle W.O."/>
            <person name="Kowalik D.J."/>
            <person name="Lagrou M."/>
            <person name="Garber R.L."/>
            <person name="Goltry L."/>
            <person name="Tolentino E."/>
            <person name="Westbrock-Wadman S."/>
            <person name="Yuan Y."/>
            <person name="Brody L.L."/>
            <person name="Coulter S.N."/>
            <person name="Folger K.R."/>
            <person name="Kas A."/>
            <person name="Larbig K."/>
            <person name="Lim R.M."/>
            <person name="Smith K.A."/>
            <person name="Spencer D.H."/>
            <person name="Wong G.K.-S."/>
            <person name="Wu Z."/>
            <person name="Paulsen I.T."/>
            <person name="Reizer J."/>
            <person name="Saier M.H. Jr."/>
            <person name="Hancock R.E.W."/>
            <person name="Lory S."/>
            <person name="Olson M.V."/>
        </authorList>
    </citation>
    <scope>NUCLEOTIDE SEQUENCE [LARGE SCALE GENOMIC DNA]</scope>
    <source>
        <strain>ATCC 15692 / DSM 22644 / CIP 104116 / JCM 14847 / LMG 12228 / 1C / PRS 101 / PAO1</strain>
    </source>
</reference>
<accession>Q9I7C3</accession>
<sequence length="369" mass="41459">MSLTRVSVTAVRNLHPVTLSPSPRINILYGDNGSGKTSVLEAIHLLGLARSFRSARLQPVIQYEEAACTVFGQVMLANGIASNLGISRERQGEFTIRIDGQNARSAAQLAETLPLQLINPDSFRLLEGAPKIRRQFLDWGVFHVEPRFLPVWQRLQKALRQRNSWLRHGKLDPASQAAWDRELSLASDEIDAYRRSYIQALKPVFEETLAELVSLDDLTLSYYRGWDKDRDLLEVLASSLLRDQQMGHTQAGPQRADLRIRLAGHNAAEILSRGQQKLVVCALRIAQGHLINRAKRGQCVYLVDDLPSELDEQHRMALCRLLEDLGCQVFITCVDPQLLKDGWRTDTPVSMFHVEHGKVSQTTTIGSEA</sequence>
<gene>
    <name type="primary">recF</name>
    <name type="ordered locus">PA0003</name>
</gene>
<feature type="chain" id="PRO_0000196443" description="DNA replication and repair protein RecF">
    <location>
        <begin position="1"/>
        <end position="369"/>
    </location>
</feature>
<feature type="binding site" evidence="2">
    <location>
        <begin position="30"/>
        <end position="37"/>
    </location>
    <ligand>
        <name>ATP</name>
        <dbReference type="ChEBI" id="CHEBI:30616"/>
    </ligand>
</feature>
<dbReference type="EMBL" id="AE004091">
    <property type="protein sequence ID" value="AAG03393.1"/>
    <property type="molecule type" value="Genomic_DNA"/>
</dbReference>
<dbReference type="PIR" id="G83644">
    <property type="entry name" value="G83644"/>
</dbReference>
<dbReference type="RefSeq" id="NP_064723.1">
    <property type="nucleotide sequence ID" value="NC_002516.2"/>
</dbReference>
<dbReference type="RefSeq" id="WP_003097265.1">
    <property type="nucleotide sequence ID" value="NC_002516.2"/>
</dbReference>
<dbReference type="SMR" id="Q9I7C3"/>
<dbReference type="FunCoup" id="Q9I7C3">
    <property type="interactions" value="239"/>
</dbReference>
<dbReference type="STRING" id="208964.PA0003"/>
<dbReference type="PaxDb" id="208964-PA0003"/>
<dbReference type="DNASU" id="879229"/>
<dbReference type="GeneID" id="879229"/>
<dbReference type="KEGG" id="pae:PA0003"/>
<dbReference type="PATRIC" id="fig|208964.12.peg.3"/>
<dbReference type="PseudoCAP" id="PA0003"/>
<dbReference type="HOGENOM" id="CLU_040267_0_0_6"/>
<dbReference type="InParanoid" id="Q9I7C3"/>
<dbReference type="OrthoDB" id="9803889at2"/>
<dbReference type="PhylomeDB" id="Q9I7C3"/>
<dbReference type="BioCyc" id="PAER208964:G1FZ6-3-MONOMER"/>
<dbReference type="Proteomes" id="UP000002438">
    <property type="component" value="Chromosome"/>
</dbReference>
<dbReference type="GO" id="GO:0005737">
    <property type="term" value="C:cytoplasm"/>
    <property type="evidence" value="ECO:0007669"/>
    <property type="project" value="UniProtKB-SubCell"/>
</dbReference>
<dbReference type="GO" id="GO:0005524">
    <property type="term" value="F:ATP binding"/>
    <property type="evidence" value="ECO:0007669"/>
    <property type="project" value="UniProtKB-UniRule"/>
</dbReference>
<dbReference type="GO" id="GO:0003697">
    <property type="term" value="F:single-stranded DNA binding"/>
    <property type="evidence" value="ECO:0007669"/>
    <property type="project" value="UniProtKB-UniRule"/>
</dbReference>
<dbReference type="GO" id="GO:0006260">
    <property type="term" value="P:DNA replication"/>
    <property type="evidence" value="ECO:0007669"/>
    <property type="project" value="UniProtKB-UniRule"/>
</dbReference>
<dbReference type="GO" id="GO:0000731">
    <property type="term" value="P:DNA synthesis involved in DNA repair"/>
    <property type="evidence" value="ECO:0000318"/>
    <property type="project" value="GO_Central"/>
</dbReference>
<dbReference type="GO" id="GO:0006302">
    <property type="term" value="P:double-strand break repair"/>
    <property type="evidence" value="ECO:0000318"/>
    <property type="project" value="GO_Central"/>
</dbReference>
<dbReference type="GO" id="GO:0009432">
    <property type="term" value="P:SOS response"/>
    <property type="evidence" value="ECO:0007669"/>
    <property type="project" value="UniProtKB-UniRule"/>
</dbReference>
<dbReference type="Gene3D" id="3.40.50.300">
    <property type="entry name" value="P-loop containing nucleotide triphosphate hydrolases"/>
    <property type="match status" value="1"/>
</dbReference>
<dbReference type="Gene3D" id="1.20.1050.90">
    <property type="entry name" value="RecF/RecN/SMC, N-terminal domain"/>
    <property type="match status" value="1"/>
</dbReference>
<dbReference type="HAMAP" id="MF_00365">
    <property type="entry name" value="RecF"/>
    <property type="match status" value="1"/>
</dbReference>
<dbReference type="InterPro" id="IPR001238">
    <property type="entry name" value="DNA-binding_RecF"/>
</dbReference>
<dbReference type="InterPro" id="IPR018078">
    <property type="entry name" value="DNA-binding_RecF_CS"/>
</dbReference>
<dbReference type="InterPro" id="IPR027417">
    <property type="entry name" value="P-loop_NTPase"/>
</dbReference>
<dbReference type="InterPro" id="IPR003395">
    <property type="entry name" value="RecF/RecN/SMC_N"/>
</dbReference>
<dbReference type="InterPro" id="IPR042174">
    <property type="entry name" value="RecF_2"/>
</dbReference>
<dbReference type="NCBIfam" id="TIGR00611">
    <property type="entry name" value="recf"/>
    <property type="match status" value="1"/>
</dbReference>
<dbReference type="PANTHER" id="PTHR32182">
    <property type="entry name" value="DNA REPLICATION AND REPAIR PROTEIN RECF"/>
    <property type="match status" value="1"/>
</dbReference>
<dbReference type="PANTHER" id="PTHR32182:SF0">
    <property type="entry name" value="DNA REPLICATION AND REPAIR PROTEIN RECF"/>
    <property type="match status" value="1"/>
</dbReference>
<dbReference type="Pfam" id="PF02463">
    <property type="entry name" value="SMC_N"/>
    <property type="match status" value="1"/>
</dbReference>
<dbReference type="SUPFAM" id="SSF52540">
    <property type="entry name" value="P-loop containing nucleoside triphosphate hydrolases"/>
    <property type="match status" value="1"/>
</dbReference>
<dbReference type="PROSITE" id="PS00617">
    <property type="entry name" value="RECF_1"/>
    <property type="match status" value="1"/>
</dbReference>
<dbReference type="PROSITE" id="PS00618">
    <property type="entry name" value="RECF_2"/>
    <property type="match status" value="1"/>
</dbReference>
<organism>
    <name type="scientific">Pseudomonas aeruginosa (strain ATCC 15692 / DSM 22644 / CIP 104116 / JCM 14847 / LMG 12228 / 1C / PRS 101 / PAO1)</name>
    <dbReference type="NCBI Taxonomy" id="208964"/>
    <lineage>
        <taxon>Bacteria</taxon>
        <taxon>Pseudomonadati</taxon>
        <taxon>Pseudomonadota</taxon>
        <taxon>Gammaproteobacteria</taxon>
        <taxon>Pseudomonadales</taxon>
        <taxon>Pseudomonadaceae</taxon>
        <taxon>Pseudomonas</taxon>
    </lineage>
</organism>
<protein>
    <recommendedName>
        <fullName>DNA replication and repair protein RecF</fullName>
    </recommendedName>
</protein>
<proteinExistence type="inferred from homology"/>
<name>RECF_PSEAE</name>